<accession>P01078</accession>
<keyword id="KW-0903">Direct protein sequencing</keyword>
<keyword id="KW-1015">Disulfide bond</keyword>
<keyword id="KW-0646">Protease inhibitor</keyword>
<keyword id="KW-0873">Pyrrolidone carboxylic acid</keyword>
<keyword id="KW-0964">Secreted</keyword>
<keyword id="KW-0722">Serine protease inhibitor</keyword>
<evidence type="ECO:0000250" key="1"/>
<evidence type="ECO:0000269" key="2">
    <source>
    </source>
</evidence>
<evidence type="ECO:0000305" key="3"/>
<dbReference type="PIR" id="A01317">
    <property type="entry name" value="TIEO1"/>
</dbReference>
<dbReference type="SMR" id="P01078"/>
<dbReference type="MEROPS" id="I20.952"/>
<dbReference type="GO" id="GO:0005576">
    <property type="term" value="C:extracellular region"/>
    <property type="evidence" value="ECO:0007669"/>
    <property type="project" value="UniProtKB-SubCell"/>
</dbReference>
<dbReference type="GO" id="GO:0004867">
    <property type="term" value="F:serine-type endopeptidase inhibitor activity"/>
    <property type="evidence" value="ECO:0007669"/>
    <property type="project" value="UniProtKB-KW"/>
</dbReference>
<dbReference type="Gene3D" id="3.30.60.30">
    <property type="match status" value="1"/>
</dbReference>
<dbReference type="InterPro" id="IPR003465">
    <property type="entry name" value="Prot_inh_I20"/>
</dbReference>
<dbReference type="InterPro" id="IPR051391">
    <property type="entry name" value="Protease_inhibitor_I20"/>
</dbReference>
<dbReference type="PANTHER" id="PTHR33832:SF26">
    <property type="entry name" value="PROTEINASE INHIBITOR TYPE-2 TR8"/>
    <property type="match status" value="1"/>
</dbReference>
<dbReference type="PANTHER" id="PTHR33832">
    <property type="entry name" value="SERINE-TYPE ENDOPEPTIDASE INHIBITOR"/>
    <property type="match status" value="1"/>
</dbReference>
<dbReference type="Pfam" id="PF02428">
    <property type="entry name" value="Prot_inhib_II"/>
    <property type="match status" value="2"/>
</dbReference>
<dbReference type="SUPFAM" id="SSF100897">
    <property type="entry name" value="Plant proteinase inhibitors"/>
    <property type="match status" value="1"/>
</dbReference>
<proteinExistence type="evidence at protein level"/>
<organism>
    <name type="scientific">Solanum melongena</name>
    <name type="common">Eggplant</name>
    <name type="synonym">Aubergine</name>
    <dbReference type="NCBI Taxonomy" id="223891"/>
    <lineage>
        <taxon>Eukaryota</taxon>
        <taxon>Viridiplantae</taxon>
        <taxon>Streptophyta</taxon>
        <taxon>Embryophyta</taxon>
        <taxon>Tracheophyta</taxon>
        <taxon>Spermatophyta</taxon>
        <taxon>Magnoliopsida</taxon>
        <taxon>eudicotyledons</taxon>
        <taxon>Gunneridae</taxon>
        <taxon>Pentapetalae</taxon>
        <taxon>asterids</taxon>
        <taxon>lamiids</taxon>
        <taxon>Solanales</taxon>
        <taxon>Solanaceae</taxon>
        <taxon>Solanoideae</taxon>
        <taxon>Solaneae</taxon>
        <taxon>Solanum</taxon>
    </lineage>
</organism>
<feature type="chain" id="PRO_0000217673" description="Proteinase inhibitor">
    <location>
        <begin position="1"/>
        <end position="52"/>
    </location>
</feature>
<feature type="site" description="Reactive bond for trypsin">
    <location>
        <begin position="38"/>
        <end position="39"/>
    </location>
</feature>
<feature type="modified residue" description="Pyrrolidone carboxylic acid" evidence="2">
    <location>
        <position position="1"/>
    </location>
</feature>
<feature type="disulfide bond" evidence="1">
    <location>
        <begin position="3"/>
        <end position="40"/>
    </location>
</feature>
<feature type="disulfide bond" evidence="1">
    <location>
        <begin position="6"/>
        <end position="24"/>
    </location>
</feature>
<feature type="disulfide bond" evidence="1">
    <location>
        <begin position="7"/>
        <end position="36"/>
    </location>
</feature>
<feature type="disulfide bond" evidence="1">
    <location>
        <begin position="13"/>
        <end position="49"/>
    </location>
</feature>
<feature type="sequence variant">
    <original>I</original>
    <variation>L</variation>
    <location>
        <position position="2"/>
    </location>
</feature>
<feature type="sequence variant">
    <original>C</original>
    <variation>N</variation>
    <location>
        <position position="6"/>
    </location>
</feature>
<sequence>QICTNCCAGRKGCSYFSEDGTFICKGESNPENPKACPRNCDGRIAYGICPLS</sequence>
<comment type="subcellular location">
    <subcellularLocation>
        <location>Secreted</location>
    </subcellularLocation>
</comment>
<comment type="similarity">
    <text evidence="3">Belongs to the protease inhibitor I20 (potato type II proteinase inhibitor) family.</text>
</comment>
<name>IPR_SOLME</name>
<reference key="1">
    <citation type="journal article" date="1979" name="FEBS Lett.">
        <title>The complete amino acid sequence and the trypsin reactive (inhibitory) site of the major proteinase inhibitor from the fruits of aubergine (Solanum melongena L.).</title>
        <authorList>
            <person name="Richardson M."/>
        </authorList>
    </citation>
    <scope>PROTEIN SEQUENCE</scope>
    <scope>PYROGLUTAMATE FORMATION AT GLN-1</scope>
</reference>
<protein>
    <recommendedName>
        <fullName>Proteinase inhibitor</fullName>
    </recommendedName>
</protein>